<comment type="function">
    <text evidence="1">DEAD-box RNA helicase involved in RNA degradation. Has RNA-dependent ATPase activity and unwinds double-stranded RNA.</text>
</comment>
<comment type="catalytic activity">
    <reaction evidence="1">
        <text>ATP + H2O = ADP + phosphate + H(+)</text>
        <dbReference type="Rhea" id="RHEA:13065"/>
        <dbReference type="ChEBI" id="CHEBI:15377"/>
        <dbReference type="ChEBI" id="CHEBI:15378"/>
        <dbReference type="ChEBI" id="CHEBI:30616"/>
        <dbReference type="ChEBI" id="CHEBI:43474"/>
        <dbReference type="ChEBI" id="CHEBI:456216"/>
        <dbReference type="EC" id="3.6.4.13"/>
    </reaction>
</comment>
<comment type="subunit">
    <text evidence="1">Component of the RNA degradosome, which is a multiprotein complex involved in RNA processing and mRNA degradation.</text>
</comment>
<comment type="subcellular location">
    <subcellularLocation>
        <location evidence="1">Cytoplasm</location>
    </subcellularLocation>
</comment>
<comment type="similarity">
    <text evidence="1">Belongs to the DEAD box helicase family. RhlB subfamily.</text>
</comment>
<dbReference type="EC" id="3.6.4.13" evidence="1"/>
<dbReference type="EMBL" id="AE017340">
    <property type="protein sequence ID" value="AAV83195.1"/>
    <property type="molecule type" value="Genomic_DNA"/>
</dbReference>
<dbReference type="RefSeq" id="WP_011235589.1">
    <property type="nucleotide sequence ID" value="NC_006512.1"/>
</dbReference>
<dbReference type="SMR" id="Q5QYF8"/>
<dbReference type="STRING" id="283942.IL2363"/>
<dbReference type="GeneID" id="41337558"/>
<dbReference type="KEGG" id="ilo:IL2363"/>
<dbReference type="eggNOG" id="COG0513">
    <property type="taxonomic scope" value="Bacteria"/>
</dbReference>
<dbReference type="HOGENOM" id="CLU_003041_1_3_6"/>
<dbReference type="OrthoDB" id="6232645at2"/>
<dbReference type="Proteomes" id="UP000001171">
    <property type="component" value="Chromosome"/>
</dbReference>
<dbReference type="GO" id="GO:0005829">
    <property type="term" value="C:cytosol"/>
    <property type="evidence" value="ECO:0007669"/>
    <property type="project" value="TreeGrafter"/>
</dbReference>
<dbReference type="GO" id="GO:0005524">
    <property type="term" value="F:ATP binding"/>
    <property type="evidence" value="ECO:0007669"/>
    <property type="project" value="UniProtKB-UniRule"/>
</dbReference>
<dbReference type="GO" id="GO:0016887">
    <property type="term" value="F:ATP hydrolysis activity"/>
    <property type="evidence" value="ECO:0007669"/>
    <property type="project" value="RHEA"/>
</dbReference>
<dbReference type="GO" id="GO:0003723">
    <property type="term" value="F:RNA binding"/>
    <property type="evidence" value="ECO:0007669"/>
    <property type="project" value="UniProtKB-UniRule"/>
</dbReference>
<dbReference type="GO" id="GO:0003724">
    <property type="term" value="F:RNA helicase activity"/>
    <property type="evidence" value="ECO:0007669"/>
    <property type="project" value="UniProtKB-UniRule"/>
</dbReference>
<dbReference type="GO" id="GO:0006401">
    <property type="term" value="P:RNA catabolic process"/>
    <property type="evidence" value="ECO:0007669"/>
    <property type="project" value="UniProtKB-UniRule"/>
</dbReference>
<dbReference type="CDD" id="cd00268">
    <property type="entry name" value="DEADc"/>
    <property type="match status" value="1"/>
</dbReference>
<dbReference type="CDD" id="cd18787">
    <property type="entry name" value="SF2_C_DEAD"/>
    <property type="match status" value="1"/>
</dbReference>
<dbReference type="Gene3D" id="3.40.50.300">
    <property type="entry name" value="P-loop containing nucleotide triphosphate hydrolases"/>
    <property type="match status" value="2"/>
</dbReference>
<dbReference type="HAMAP" id="MF_00661">
    <property type="entry name" value="DEAD_helicase_RhlB"/>
    <property type="match status" value="1"/>
</dbReference>
<dbReference type="InterPro" id="IPR011545">
    <property type="entry name" value="DEAD/DEAH_box_helicase_dom"/>
</dbReference>
<dbReference type="InterPro" id="IPR050079">
    <property type="entry name" value="DEAD_box_RNA_helicase"/>
</dbReference>
<dbReference type="InterPro" id="IPR014001">
    <property type="entry name" value="Helicase_ATP-bd"/>
</dbReference>
<dbReference type="InterPro" id="IPR001650">
    <property type="entry name" value="Helicase_C-like"/>
</dbReference>
<dbReference type="InterPro" id="IPR027417">
    <property type="entry name" value="P-loop_NTPase"/>
</dbReference>
<dbReference type="InterPro" id="IPR000629">
    <property type="entry name" value="RNA-helicase_DEAD-box_CS"/>
</dbReference>
<dbReference type="InterPro" id="IPR023554">
    <property type="entry name" value="RNA_helicase_ATP-dep_RhlB"/>
</dbReference>
<dbReference type="InterPro" id="IPR014014">
    <property type="entry name" value="RNA_helicase_DEAD_Q_motif"/>
</dbReference>
<dbReference type="NCBIfam" id="NF003419">
    <property type="entry name" value="PRK04837.1"/>
    <property type="match status" value="1"/>
</dbReference>
<dbReference type="PANTHER" id="PTHR47959:SF10">
    <property type="entry name" value="ATP-DEPENDENT RNA HELICASE RHLB"/>
    <property type="match status" value="1"/>
</dbReference>
<dbReference type="PANTHER" id="PTHR47959">
    <property type="entry name" value="ATP-DEPENDENT RNA HELICASE RHLE-RELATED"/>
    <property type="match status" value="1"/>
</dbReference>
<dbReference type="Pfam" id="PF00270">
    <property type="entry name" value="DEAD"/>
    <property type="match status" value="1"/>
</dbReference>
<dbReference type="Pfam" id="PF00271">
    <property type="entry name" value="Helicase_C"/>
    <property type="match status" value="1"/>
</dbReference>
<dbReference type="SMART" id="SM00487">
    <property type="entry name" value="DEXDc"/>
    <property type="match status" value="1"/>
</dbReference>
<dbReference type="SMART" id="SM00490">
    <property type="entry name" value="HELICc"/>
    <property type="match status" value="1"/>
</dbReference>
<dbReference type="SUPFAM" id="SSF52540">
    <property type="entry name" value="P-loop containing nucleoside triphosphate hydrolases"/>
    <property type="match status" value="1"/>
</dbReference>
<dbReference type="PROSITE" id="PS00039">
    <property type="entry name" value="DEAD_ATP_HELICASE"/>
    <property type="match status" value="1"/>
</dbReference>
<dbReference type="PROSITE" id="PS51192">
    <property type="entry name" value="HELICASE_ATP_BIND_1"/>
    <property type="match status" value="1"/>
</dbReference>
<dbReference type="PROSITE" id="PS51194">
    <property type="entry name" value="HELICASE_CTER"/>
    <property type="match status" value="1"/>
</dbReference>
<dbReference type="PROSITE" id="PS51195">
    <property type="entry name" value="Q_MOTIF"/>
    <property type="match status" value="1"/>
</dbReference>
<proteinExistence type="inferred from homology"/>
<organism>
    <name type="scientific">Idiomarina loihiensis (strain ATCC BAA-735 / DSM 15497 / L2-TR)</name>
    <dbReference type="NCBI Taxonomy" id="283942"/>
    <lineage>
        <taxon>Bacteria</taxon>
        <taxon>Pseudomonadati</taxon>
        <taxon>Pseudomonadota</taxon>
        <taxon>Gammaproteobacteria</taxon>
        <taxon>Alteromonadales</taxon>
        <taxon>Idiomarinaceae</taxon>
        <taxon>Idiomarina</taxon>
    </lineage>
</organism>
<accession>Q5QYF8</accession>
<keyword id="KW-0067">ATP-binding</keyword>
<keyword id="KW-0963">Cytoplasm</keyword>
<keyword id="KW-0347">Helicase</keyword>
<keyword id="KW-0378">Hydrolase</keyword>
<keyword id="KW-0547">Nucleotide-binding</keyword>
<keyword id="KW-1185">Reference proteome</keyword>
<keyword id="KW-0694">RNA-binding</keyword>
<feature type="chain" id="PRO_0000200774" description="ATP-dependent RNA helicase RhlB">
    <location>
        <begin position="1"/>
        <end position="425"/>
    </location>
</feature>
<feature type="domain" description="Helicase ATP-binding" evidence="1">
    <location>
        <begin position="40"/>
        <end position="218"/>
    </location>
</feature>
<feature type="domain" description="Helicase C-terminal" evidence="1">
    <location>
        <begin position="242"/>
        <end position="389"/>
    </location>
</feature>
<feature type="region of interest" description="Disordered" evidence="2">
    <location>
        <begin position="391"/>
        <end position="425"/>
    </location>
</feature>
<feature type="short sequence motif" description="Q motif">
    <location>
        <begin position="9"/>
        <end position="37"/>
    </location>
</feature>
<feature type="short sequence motif" description="DEAD box">
    <location>
        <begin position="164"/>
        <end position="167"/>
    </location>
</feature>
<feature type="compositionally biased region" description="Basic residues" evidence="2">
    <location>
        <begin position="395"/>
        <end position="419"/>
    </location>
</feature>
<feature type="binding site" evidence="1">
    <location>
        <begin position="53"/>
        <end position="60"/>
    </location>
    <ligand>
        <name>ATP</name>
        <dbReference type="ChEBI" id="CHEBI:30616"/>
    </ligand>
</feature>
<name>RHLB_IDILO</name>
<gene>
    <name evidence="1" type="primary">rhlB</name>
    <name type="ordered locus">IL2363</name>
</gene>
<evidence type="ECO:0000255" key="1">
    <source>
        <dbReference type="HAMAP-Rule" id="MF_00661"/>
    </source>
</evidence>
<evidence type="ECO:0000256" key="2">
    <source>
        <dbReference type="SAM" id="MobiDB-lite"/>
    </source>
</evidence>
<reference key="1">
    <citation type="journal article" date="2004" name="Proc. Natl. Acad. Sci. U.S.A.">
        <title>Genome sequence of the deep-sea gamma-proteobacterium Idiomarina loihiensis reveals amino acid fermentation as a source of carbon and energy.</title>
        <authorList>
            <person name="Hou S."/>
            <person name="Saw J.H."/>
            <person name="Lee K.S."/>
            <person name="Freitas T.A."/>
            <person name="Belisle C."/>
            <person name="Kawarabayasi Y."/>
            <person name="Donachie S.P."/>
            <person name="Pikina A."/>
            <person name="Galperin M.Y."/>
            <person name="Koonin E.V."/>
            <person name="Makarova K.S."/>
            <person name="Omelchenko M.V."/>
            <person name="Sorokin A."/>
            <person name="Wolf Y.I."/>
            <person name="Li Q.X."/>
            <person name="Keum Y.S."/>
            <person name="Campbell S."/>
            <person name="Denery J."/>
            <person name="Aizawa S."/>
            <person name="Shibata S."/>
            <person name="Malahoff A."/>
            <person name="Alam M."/>
        </authorList>
    </citation>
    <scope>NUCLEOTIDE SEQUENCE [LARGE SCALE GENOMIC DNA]</scope>
    <source>
        <strain>ATCC BAA-735 / DSM 15497 / L2-TR</strain>
    </source>
</reference>
<sequence length="425" mass="47359">MTKKHLTETRFADLALHPKIQQAISSAGFEYCTPIQALSLPVALSNRDVAGQAQTGTGKTLAFLLATFNRLMQNESSEKTESGPRALIMAPTRELAIQIAHDADALIEHCGLKMGVIYGGEGYEGQKEQLAAQPDILVGTTGRLIDFYKQDLFSLKDIEVVVLDEADRMFDLGFIDDIRYLLQKMPDPSKRLNLLFSATLSYRVQELAYEHMNAPTKLEVEPLQKTATRVTEELFYPSKPEKFPLLLTLIEEDWPDKAIVFANTKHGCEKVHGWLVANEHRAGLLTGDVPQKKRLRILEDFAEGKLDFLVATDVAARGLHIPEVTHVYNFDLPDDCEDYVHRIGRTGRAGASGAAISLACEEYVYNLPAIEDYIGHTIPVTKYDGDALLSDLRRPRPIQRRRRHNSGGGKGKPRGRRSGPPRNAS</sequence>
<protein>
    <recommendedName>
        <fullName evidence="1">ATP-dependent RNA helicase RhlB</fullName>
        <ecNumber evidence="1">3.6.4.13</ecNumber>
    </recommendedName>
</protein>